<evidence type="ECO:0000250" key="1"/>
<evidence type="ECO:0000250" key="2">
    <source>
        <dbReference type="UniProtKB" id="P52564"/>
    </source>
</evidence>
<evidence type="ECO:0000255" key="3">
    <source>
        <dbReference type="PROSITE-ProRule" id="PRU00159"/>
    </source>
</evidence>
<evidence type="ECO:0000255" key="4">
    <source>
        <dbReference type="PROSITE-ProRule" id="PRU10027"/>
    </source>
</evidence>
<evidence type="ECO:0000256" key="5">
    <source>
        <dbReference type="SAM" id="MobiDB-lite"/>
    </source>
</evidence>
<evidence type="ECO:0000269" key="6">
    <source>
    </source>
</evidence>
<evidence type="ECO:0000269" key="7">
    <source>
    </source>
</evidence>
<evidence type="ECO:0000269" key="8">
    <source>
    </source>
</evidence>
<evidence type="ECO:0000269" key="9">
    <source>
    </source>
</evidence>
<evidence type="ECO:0000269" key="10">
    <source>
    </source>
</evidence>
<evidence type="ECO:0000269" key="11">
    <source>
    </source>
</evidence>
<evidence type="ECO:0000269" key="12">
    <source>
    </source>
</evidence>
<evidence type="ECO:0000269" key="13">
    <source>
    </source>
</evidence>
<evidence type="ECO:0000305" key="14"/>
<accession>P70236</accession>
<dbReference type="EC" id="2.7.12.2"/>
<dbReference type="EMBL" id="X97052">
    <property type="protein sequence ID" value="CAA65764.1"/>
    <property type="molecule type" value="mRNA"/>
</dbReference>
<dbReference type="EMBL" id="BC075652">
    <property type="protein sequence ID" value="AAH75652.1"/>
    <property type="molecule type" value="mRNA"/>
</dbReference>
<dbReference type="CCDS" id="CCDS25592.1"/>
<dbReference type="PIR" id="S71632">
    <property type="entry name" value="S71632"/>
</dbReference>
<dbReference type="RefSeq" id="NP_036073.1">
    <property type="nucleotide sequence ID" value="NM_011943.3"/>
</dbReference>
<dbReference type="SMR" id="P70236"/>
<dbReference type="BioGRID" id="204953">
    <property type="interactions" value="17"/>
</dbReference>
<dbReference type="FunCoup" id="P70236">
    <property type="interactions" value="2788"/>
</dbReference>
<dbReference type="STRING" id="10090.ENSMUSP00000020949"/>
<dbReference type="iPTMnet" id="P70236"/>
<dbReference type="PhosphoSitePlus" id="P70236"/>
<dbReference type="jPOST" id="P70236"/>
<dbReference type="PaxDb" id="10090-ENSMUSP00000020949"/>
<dbReference type="PeptideAtlas" id="P70236"/>
<dbReference type="ProteomicsDB" id="252602"/>
<dbReference type="Pumba" id="P70236"/>
<dbReference type="Antibodypedia" id="3570">
    <property type="antibodies" value="880 antibodies from 41 providers"/>
</dbReference>
<dbReference type="DNASU" id="26399"/>
<dbReference type="Ensembl" id="ENSMUST00000020949.12">
    <property type="protein sequence ID" value="ENSMUSP00000020949.6"/>
    <property type="gene ID" value="ENSMUSG00000020623.12"/>
</dbReference>
<dbReference type="GeneID" id="26399"/>
<dbReference type="KEGG" id="mmu:26399"/>
<dbReference type="UCSC" id="uc007mdr.1">
    <property type="organism name" value="mouse"/>
</dbReference>
<dbReference type="AGR" id="MGI:1346870"/>
<dbReference type="CTD" id="5608"/>
<dbReference type="MGI" id="MGI:1346870">
    <property type="gene designation" value="Map2k6"/>
</dbReference>
<dbReference type="VEuPathDB" id="HostDB:ENSMUSG00000020623"/>
<dbReference type="eggNOG" id="KOG0984">
    <property type="taxonomic scope" value="Eukaryota"/>
</dbReference>
<dbReference type="GeneTree" id="ENSGT00940000157836"/>
<dbReference type="InParanoid" id="P70236"/>
<dbReference type="OMA" id="FPYNTWG"/>
<dbReference type="OrthoDB" id="10252354at2759"/>
<dbReference type="PhylomeDB" id="P70236"/>
<dbReference type="TreeFam" id="TF350701"/>
<dbReference type="BRENDA" id="2.7.12.2">
    <property type="organism ID" value="3474"/>
</dbReference>
<dbReference type="Reactome" id="R-MMU-168638">
    <property type="pathway name" value="NOD1/2 Signaling Pathway"/>
</dbReference>
<dbReference type="Reactome" id="R-MMU-2559580">
    <property type="pathway name" value="Oxidative Stress Induced Senescence"/>
</dbReference>
<dbReference type="Reactome" id="R-MMU-450302">
    <property type="pathway name" value="activated TAK1 mediates p38 MAPK activation"/>
</dbReference>
<dbReference type="Reactome" id="R-MMU-6811555">
    <property type="pathway name" value="PI5P Regulates TP53 Acetylation"/>
</dbReference>
<dbReference type="Reactome" id="R-MMU-9020702">
    <property type="pathway name" value="Interleukin-1 signaling"/>
</dbReference>
<dbReference type="Reactome" id="R-MMU-9833482">
    <property type="pathway name" value="PKR-mediated signaling"/>
</dbReference>
<dbReference type="BioGRID-ORCS" id="26399">
    <property type="hits" value="4 hits in 78 CRISPR screens"/>
</dbReference>
<dbReference type="ChiTaRS" id="Map2k6">
    <property type="organism name" value="mouse"/>
</dbReference>
<dbReference type="PRO" id="PR:P70236"/>
<dbReference type="Proteomes" id="UP000000589">
    <property type="component" value="Chromosome 11"/>
</dbReference>
<dbReference type="RNAct" id="P70236">
    <property type="molecule type" value="protein"/>
</dbReference>
<dbReference type="Bgee" id="ENSMUSG00000020623">
    <property type="expression patterns" value="Expressed in cortical plate and 212 other cell types or tissues"/>
</dbReference>
<dbReference type="ExpressionAtlas" id="P70236">
    <property type="expression patterns" value="baseline and differential"/>
</dbReference>
<dbReference type="GO" id="GO:0005856">
    <property type="term" value="C:cytoskeleton"/>
    <property type="evidence" value="ECO:0007669"/>
    <property type="project" value="UniProtKB-SubCell"/>
</dbReference>
<dbReference type="GO" id="GO:0005829">
    <property type="term" value="C:cytosol"/>
    <property type="evidence" value="ECO:0000266"/>
    <property type="project" value="MGI"/>
</dbReference>
<dbReference type="GO" id="GO:0005654">
    <property type="term" value="C:nucleoplasm"/>
    <property type="evidence" value="ECO:0007669"/>
    <property type="project" value="Ensembl"/>
</dbReference>
<dbReference type="GO" id="GO:0005524">
    <property type="term" value="F:ATP binding"/>
    <property type="evidence" value="ECO:0007669"/>
    <property type="project" value="UniProtKB-KW"/>
</dbReference>
<dbReference type="GO" id="GO:0004708">
    <property type="term" value="F:MAP kinase kinase activity"/>
    <property type="evidence" value="ECO:0000315"/>
    <property type="project" value="MGI"/>
</dbReference>
<dbReference type="GO" id="GO:0019901">
    <property type="term" value="F:protein kinase binding"/>
    <property type="evidence" value="ECO:0007669"/>
    <property type="project" value="Ensembl"/>
</dbReference>
<dbReference type="GO" id="GO:0106310">
    <property type="term" value="F:protein serine kinase activity"/>
    <property type="evidence" value="ECO:0007669"/>
    <property type="project" value="RHEA"/>
</dbReference>
<dbReference type="GO" id="GO:0004674">
    <property type="term" value="F:protein serine/threonine kinase activity"/>
    <property type="evidence" value="ECO:0007669"/>
    <property type="project" value="UniProtKB-KW"/>
</dbReference>
<dbReference type="GO" id="GO:0004713">
    <property type="term" value="F:protein tyrosine kinase activity"/>
    <property type="evidence" value="ECO:0007669"/>
    <property type="project" value="UniProtKB-KW"/>
</dbReference>
<dbReference type="GO" id="GO:0006915">
    <property type="term" value="P:apoptotic process"/>
    <property type="evidence" value="ECO:0007669"/>
    <property type="project" value="UniProtKB-KW"/>
</dbReference>
<dbReference type="GO" id="GO:0060348">
    <property type="term" value="P:bone development"/>
    <property type="evidence" value="ECO:0000315"/>
    <property type="project" value="MGI"/>
</dbReference>
<dbReference type="GO" id="GO:0060048">
    <property type="term" value="P:cardiac muscle contraction"/>
    <property type="evidence" value="ECO:0000315"/>
    <property type="project" value="MGI"/>
</dbReference>
<dbReference type="GO" id="GO:0000165">
    <property type="term" value="P:MAPK cascade"/>
    <property type="evidence" value="ECO:0000315"/>
    <property type="project" value="MGI"/>
</dbReference>
<dbReference type="GO" id="GO:0120163">
    <property type="term" value="P:negative regulation of cold-induced thermogenesis"/>
    <property type="evidence" value="ECO:0000315"/>
    <property type="project" value="YuBioLab"/>
</dbReference>
<dbReference type="GO" id="GO:0001649">
    <property type="term" value="P:osteoblast differentiation"/>
    <property type="evidence" value="ECO:0000315"/>
    <property type="project" value="MGI"/>
</dbReference>
<dbReference type="GO" id="GO:0038066">
    <property type="term" value="P:p38MAPK cascade"/>
    <property type="evidence" value="ECO:0007669"/>
    <property type="project" value="Ensembl"/>
</dbReference>
<dbReference type="GO" id="GO:0043410">
    <property type="term" value="P:positive regulation of MAPK cascade"/>
    <property type="evidence" value="ECO:0000314"/>
    <property type="project" value="MGI"/>
</dbReference>
<dbReference type="GO" id="GO:0051403">
    <property type="term" value="P:stress-activated MAPK cascade"/>
    <property type="evidence" value="ECO:0007669"/>
    <property type="project" value="Ensembl"/>
</dbReference>
<dbReference type="CDD" id="cd06617">
    <property type="entry name" value="PKc_MKK3_6"/>
    <property type="match status" value="1"/>
</dbReference>
<dbReference type="FunFam" id="3.30.200.20:FF:000040">
    <property type="entry name" value="Dual specificity mitogen-activated protein kinase kinase"/>
    <property type="match status" value="1"/>
</dbReference>
<dbReference type="FunFam" id="1.10.510.10:FF:000158">
    <property type="entry name" value="Dual specificity mitogen-activated protein kinase kinase 6"/>
    <property type="match status" value="1"/>
</dbReference>
<dbReference type="Gene3D" id="3.30.200.20">
    <property type="entry name" value="Phosphorylase Kinase, domain 1"/>
    <property type="match status" value="1"/>
</dbReference>
<dbReference type="Gene3D" id="1.10.510.10">
    <property type="entry name" value="Transferase(Phosphotransferase) domain 1"/>
    <property type="match status" value="1"/>
</dbReference>
<dbReference type="InterPro" id="IPR011009">
    <property type="entry name" value="Kinase-like_dom_sf"/>
</dbReference>
<dbReference type="InterPro" id="IPR000719">
    <property type="entry name" value="Prot_kinase_dom"/>
</dbReference>
<dbReference type="InterPro" id="IPR017441">
    <property type="entry name" value="Protein_kinase_ATP_BS"/>
</dbReference>
<dbReference type="InterPro" id="IPR008271">
    <property type="entry name" value="Ser/Thr_kinase_AS"/>
</dbReference>
<dbReference type="PANTHER" id="PTHR48013">
    <property type="entry name" value="DUAL SPECIFICITY MITOGEN-ACTIVATED PROTEIN KINASE KINASE 5-RELATED"/>
    <property type="match status" value="1"/>
</dbReference>
<dbReference type="PANTHER" id="PTHR48013:SF12">
    <property type="entry name" value="DUAL SPECIFICITY MITOGEN-ACTIVATED PROTEIN KINASE KINASE 6"/>
    <property type="match status" value="1"/>
</dbReference>
<dbReference type="Pfam" id="PF00069">
    <property type="entry name" value="Pkinase"/>
    <property type="match status" value="1"/>
</dbReference>
<dbReference type="PIRSF" id="PIRSF000654">
    <property type="entry name" value="Integrin-linked_kinase"/>
    <property type="match status" value="1"/>
</dbReference>
<dbReference type="SMART" id="SM00220">
    <property type="entry name" value="S_TKc"/>
    <property type="match status" value="1"/>
</dbReference>
<dbReference type="SUPFAM" id="SSF56112">
    <property type="entry name" value="Protein kinase-like (PK-like)"/>
    <property type="match status" value="1"/>
</dbReference>
<dbReference type="PROSITE" id="PS00107">
    <property type="entry name" value="PROTEIN_KINASE_ATP"/>
    <property type="match status" value="1"/>
</dbReference>
<dbReference type="PROSITE" id="PS50011">
    <property type="entry name" value="PROTEIN_KINASE_DOM"/>
    <property type="match status" value="1"/>
</dbReference>
<dbReference type="PROSITE" id="PS00108">
    <property type="entry name" value="PROTEIN_KINASE_ST"/>
    <property type="match status" value="1"/>
</dbReference>
<organism>
    <name type="scientific">Mus musculus</name>
    <name type="common">Mouse</name>
    <dbReference type="NCBI Taxonomy" id="10090"/>
    <lineage>
        <taxon>Eukaryota</taxon>
        <taxon>Metazoa</taxon>
        <taxon>Chordata</taxon>
        <taxon>Craniata</taxon>
        <taxon>Vertebrata</taxon>
        <taxon>Euteleostomi</taxon>
        <taxon>Mammalia</taxon>
        <taxon>Eutheria</taxon>
        <taxon>Euarchontoglires</taxon>
        <taxon>Glires</taxon>
        <taxon>Rodentia</taxon>
        <taxon>Myomorpha</taxon>
        <taxon>Muroidea</taxon>
        <taxon>Muridae</taxon>
        <taxon>Murinae</taxon>
        <taxon>Mus</taxon>
        <taxon>Mus</taxon>
    </lineage>
</organism>
<keyword id="KW-0053">Apoptosis</keyword>
<keyword id="KW-0067">ATP-binding</keyword>
<keyword id="KW-0963">Cytoplasm</keyword>
<keyword id="KW-0206">Cytoskeleton</keyword>
<keyword id="KW-0418">Kinase</keyword>
<keyword id="KW-0547">Nucleotide-binding</keyword>
<keyword id="KW-0539">Nucleus</keyword>
<keyword id="KW-0597">Phosphoprotein</keyword>
<keyword id="KW-1185">Reference proteome</keyword>
<keyword id="KW-0723">Serine/threonine-protein kinase</keyword>
<keyword id="KW-0346">Stress response</keyword>
<keyword id="KW-0804">Transcription</keyword>
<keyword id="KW-0805">Transcription regulation</keyword>
<keyword id="KW-0808">Transferase</keyword>
<keyword id="KW-0829">Tyrosine-protein kinase</keyword>
<keyword id="KW-0832">Ubl conjugation</keyword>
<feature type="chain" id="PRO_0000086387" description="Dual specificity mitogen-activated protein kinase kinase 6">
    <location>
        <begin position="1"/>
        <end position="334"/>
    </location>
</feature>
<feature type="domain" description="Protein kinase" evidence="3">
    <location>
        <begin position="53"/>
        <end position="314"/>
    </location>
</feature>
<feature type="region of interest" description="Disordered" evidence="5">
    <location>
        <begin position="1"/>
        <end position="34"/>
    </location>
</feature>
<feature type="region of interest" description="D domain" evidence="1">
    <location>
        <begin position="4"/>
        <end position="19"/>
    </location>
</feature>
<feature type="region of interest" description="DVD domain" evidence="1">
    <location>
        <begin position="311"/>
        <end position="334"/>
    </location>
</feature>
<feature type="compositionally biased region" description="Basic residues" evidence="5">
    <location>
        <begin position="1"/>
        <end position="11"/>
    </location>
</feature>
<feature type="active site" description="Proton acceptor" evidence="3 4">
    <location>
        <position position="179"/>
    </location>
</feature>
<feature type="binding site" evidence="3">
    <location>
        <begin position="59"/>
        <end position="67"/>
    </location>
    <ligand>
        <name>ATP</name>
        <dbReference type="ChEBI" id="CHEBI:30616"/>
    </ligand>
</feature>
<feature type="binding site" evidence="3">
    <location>
        <position position="82"/>
    </location>
    <ligand>
        <name>ATP</name>
        <dbReference type="ChEBI" id="CHEBI:30616"/>
    </ligand>
</feature>
<feature type="modified residue" description="Phosphoserine; by MAPK3" evidence="2">
    <location>
        <position position="207"/>
    </location>
</feature>
<feature type="modified residue" description="Phosphothreonine; by MAPK3" evidence="2">
    <location>
        <position position="211"/>
    </location>
</feature>
<comment type="function">
    <text evidence="6 8 9 10 11 12 13">Dual specificity protein kinase which acts as an essential component of the MAP kinase signal transduction pathway. With MAP3K3/MKK3, catalyzes the concomitant phosphorylation of a threonine and a tyrosine residue in the MAP kinases p38 MAPK11, MAPK12, MAPK13 and MAPK14 and plays an important role in the regulation of cellular responses to cytokines and all kinds of stresses. Especially, MAP2K3/MKK3 and MAP2K6/MKK6 are both essential for the activation of MAPK11 and MAPK13 induced by environmental stress, whereas MAP2K6/MKK6 is the major MAPK11 activator in response to TNF. MAP2K6/MKK6 also phosphorylates and activates PAK6. The p38 MAP kinase signal transduction pathway leads to direct activation of transcription factors. Nuclear targets of p38 MAP kinase include the transcription factors ATF2 and ELK1. Within the p38 MAPK signal transduction pathway, MAP3K6/MKK6 mediates phosphorylation of STAT4 through MAPK14 activation, and is therefore required for STAT4 activation and STAT4-regulated gene expression in response to IL-12 stimulation. The pathway is also crucial for IL-6-induced SOCS3 expression and down-regulation of IL-6-mediated gene induction; and for IFNG-dependent gene transcription. Has a role in osteoclast differentiation through NF-kappa-B transactivation by TNFSF11, and in endochondral ossification and since SOX9 is another likely downstream target of the p38 MAPK pathway. MAP2K6/MKK6 mediates apoptotic cell death in thymocytes. Acts also as a regulator for melanocytes dendricity, through the modulation of Rho family GTPases.</text>
</comment>
<comment type="catalytic activity">
    <reaction>
        <text>L-seryl-[protein] + ATP = O-phospho-L-seryl-[protein] + ADP + H(+)</text>
        <dbReference type="Rhea" id="RHEA:17989"/>
        <dbReference type="Rhea" id="RHEA-COMP:9863"/>
        <dbReference type="Rhea" id="RHEA-COMP:11604"/>
        <dbReference type="ChEBI" id="CHEBI:15378"/>
        <dbReference type="ChEBI" id="CHEBI:29999"/>
        <dbReference type="ChEBI" id="CHEBI:30616"/>
        <dbReference type="ChEBI" id="CHEBI:83421"/>
        <dbReference type="ChEBI" id="CHEBI:456216"/>
        <dbReference type="EC" id="2.7.12.2"/>
    </reaction>
</comment>
<comment type="catalytic activity">
    <reaction>
        <text>L-threonyl-[protein] + ATP = O-phospho-L-threonyl-[protein] + ADP + H(+)</text>
        <dbReference type="Rhea" id="RHEA:46608"/>
        <dbReference type="Rhea" id="RHEA-COMP:11060"/>
        <dbReference type="Rhea" id="RHEA-COMP:11605"/>
        <dbReference type="ChEBI" id="CHEBI:15378"/>
        <dbReference type="ChEBI" id="CHEBI:30013"/>
        <dbReference type="ChEBI" id="CHEBI:30616"/>
        <dbReference type="ChEBI" id="CHEBI:61977"/>
        <dbReference type="ChEBI" id="CHEBI:456216"/>
        <dbReference type="EC" id="2.7.12.2"/>
    </reaction>
</comment>
<comment type="catalytic activity">
    <reaction>
        <text>L-tyrosyl-[protein] + ATP = O-phospho-L-tyrosyl-[protein] + ADP + H(+)</text>
        <dbReference type="Rhea" id="RHEA:10596"/>
        <dbReference type="Rhea" id="RHEA-COMP:10136"/>
        <dbReference type="Rhea" id="RHEA-COMP:20101"/>
        <dbReference type="ChEBI" id="CHEBI:15378"/>
        <dbReference type="ChEBI" id="CHEBI:30616"/>
        <dbReference type="ChEBI" id="CHEBI:46858"/>
        <dbReference type="ChEBI" id="CHEBI:61978"/>
        <dbReference type="ChEBI" id="CHEBI:456216"/>
        <dbReference type="EC" id="2.7.12.2"/>
    </reaction>
</comment>
<comment type="activity regulation">
    <text evidence="10">Activated by dual phosphorylation on Ser-207 and Thr-211 in response to a variety of cellular stresses, including UV radiation, osmotic shock, hypoxia, inflammatory cytokines, interferon gamma (IFNG), and less often by growth factors. MAP2K6/MKK6 is activated by the majority of M3Ks, such as MAP3K5/ASK1, MAP3K1/MEKK1, MAP3K2/MEKK2, MAP3K3/MEKK3, MAP3K4/MEKK4, MAP3K7/TAK1, MAP3K11/MLK3 and MAP3K17/TAOK2.</text>
</comment>
<comment type="subunit">
    <text evidence="2">Dimer. Interacts (via its D domain) with its substrates MAPK11, MAPK12, MAPK13 and MAPK14. Interacts (via its DVD domain) with MAP3Ks activators like MAP3K5/ASK1, MAP3K1/MEKK1, MAP3K2/MEKK2, MAP3K3/MEKK3, MAP3K4/MEKK4, MAP3K7/TAK1, MAP3K11/MLK3 and MAP3K17/TAOK2. Interacts with DCTN1. Interacts with EIF2AK2/PKR.</text>
</comment>
<comment type="subcellular location">
    <subcellularLocation>
        <location evidence="2">Nucleus</location>
    </subcellularLocation>
    <subcellularLocation>
        <location evidence="2">Cytoplasm</location>
    </subcellularLocation>
    <subcellularLocation>
        <location evidence="2">Cytoplasm</location>
        <location evidence="2">Cytoskeleton</location>
    </subcellularLocation>
    <text evidence="2">Binds to microtubules.</text>
</comment>
<comment type="induction">
    <text evidence="7">MSAPK14 can negatively regulate the stability of the MAP2K6/MKK6 mRNA and thus control the steady-state concentration of one of its upstream activator.</text>
</comment>
<comment type="domain">
    <text evidence="1">The DVD domain (residues 311-334) contains a conserved docking site and is found in the mammalian MAP kinase kinases (MAP2Ks). The DVD sites bind to their specific upstream MAP kinase kinase kinases (MAP3Ks) and are essential for activation (By similarity).</text>
</comment>
<comment type="domain">
    <text evidence="1">The D domain (residues 4-19) contains a conserved docking site and is required for the binding to MAPK substrates.</text>
</comment>
<comment type="PTM">
    <text evidence="2">Weakly autophosphorylated. Phosphorylated at Ser-207 and Thr-211 by the majority of M3Ks, such as MAP3K5/ASK1, MAP3K1/MEKK1, MAP3K2/MEKK2, MAP3K3/MEKK3, MAP3K4/MEKK4, MAP3K7/TAK1, MAP3K11/MLK3 and MAP3K17/TAOK2.</text>
</comment>
<comment type="PTM">
    <text evidence="2">In response to genotoxic stress, MAP3K-phosphorylated MAP2K6 is ubiquitinated and degraded by the SCF(FBXO31) complex.</text>
</comment>
<comment type="similarity">
    <text evidence="14">Belongs to the protein kinase superfamily. STE Ser/Thr protein kinase family. MAP kinase kinase subfamily.</text>
</comment>
<name>MP2K6_MOUSE</name>
<gene>
    <name type="primary">Map2k6</name>
    <name type="synonym">Prkmk6</name>
    <name type="synonym">Sapkk3</name>
</gene>
<protein>
    <recommendedName>
        <fullName>Dual specificity mitogen-activated protein kinase kinase 6</fullName>
        <shortName>MAP kinase kinase 6</shortName>
        <shortName>MAPKK 6</shortName>
        <ecNumber>2.7.12.2</ecNumber>
    </recommendedName>
    <alternativeName>
        <fullName>MAPK/ERK kinase 6</fullName>
        <shortName>MEK 6</shortName>
    </alternativeName>
    <alternativeName>
        <fullName>SAPKK3</fullName>
    </alternativeName>
</protein>
<sequence length="334" mass="37432">MSQSKGKKRNPGLKIPKEAFEQPQTSSTPPRDLDSKACISIGNQNFEVKADDLEPIVELGRGAYGVVEKMRHVPSGQIMAVKRIRATVNSQEQKRLLMDLDVSMRTVDCPFTVTFYGALFREGDVWICMELMDTSLDKFYKQVIDKGQTIPEDILGKIAVSIVKALEHLHSKLSVIHRDVKPSNVLINTLGQVKMCDFGISGYLVDSVAKTIDAGCKPYMAPERINPELNQKGYSVKSDIWSLGITMIELAILRFPYDSWGTPFQQLKQVVEEPSPQLPADKFSADFVDFTSQCLKKNSKERPTYPELMQHPFFTVHESKAADVASFVKLILGD</sequence>
<proteinExistence type="evidence at protein level"/>
<reference key="1">
    <citation type="journal article" date="1996" name="EMBO J.">
        <title>Purification and cDNA cloning of SAPKK3, the major activator of RK/p38 in stress- and cytokine-stimulated monocytes and epithelial cells.</title>
        <authorList>
            <person name="Cuenda A."/>
            <person name="Alonso G."/>
            <person name="Morrice N."/>
            <person name="Jones M."/>
            <person name="Meier R."/>
            <person name="Cohen P."/>
            <person name="Nebreda A.R."/>
        </authorList>
    </citation>
    <scope>NUCLEOTIDE SEQUENCE [MRNA]</scope>
</reference>
<reference key="2">
    <citation type="journal article" date="2004" name="Genome Res.">
        <title>The status, quality, and expansion of the NIH full-length cDNA project: the Mammalian Gene Collection (MGC).</title>
        <authorList>
            <consortium name="The MGC Project Team"/>
        </authorList>
    </citation>
    <scope>NUCLEOTIDE SEQUENCE [LARGE SCALE MRNA]</scope>
    <source>
        <strain>C57BL/6J</strain>
        <tissue>Eye</tissue>
    </source>
</reference>
<reference key="3">
    <citation type="journal article" date="2002" name="EMBO Rep.">
        <title>Differential involvement of p38 mitogen-activated protein kinase kinases MKK3 and MKK6 in T-cell apoptosis.</title>
        <authorList>
            <person name="Tanaka N."/>
            <person name="Kamanaka M."/>
            <person name="Enslen H."/>
            <person name="Dong C."/>
            <person name="Wysk M."/>
            <person name="Davis R.J."/>
            <person name="Flavell R.A."/>
        </authorList>
    </citation>
    <scope>FUNCTION IN REGULATION OF T-CELL APOPTOSIS</scope>
</reference>
<reference key="4">
    <citation type="journal article" date="2003" name="FASEB J.">
        <title>Involvement of MKK6 in TCRalphabeta(int)CD69lo: a target population for apoptotic cell death in thymocytes.</title>
        <authorList>
            <person name="Suzuki H."/>
            <person name="Wu J."/>
            <person name="Hossain K."/>
            <person name="Ohhata T."/>
            <person name="Du J."/>
            <person name="Akhand A.A."/>
            <person name="Hayakawa A."/>
            <person name="Kimura H."/>
            <person name="Hagiwara M."/>
            <person name="Nakashima I."/>
        </authorList>
    </citation>
    <scope>FUNCTION IN REGULATION OF T-CELL APOPTOSIS</scope>
</reference>
<reference key="5">
    <citation type="journal article" date="2003" name="Genes Dev.">
        <title>Mechanism of p38 MAP kinase activation in vivo.</title>
        <authorList>
            <person name="Brancho D."/>
            <person name="Tanaka N."/>
            <person name="Jaeschke A."/>
            <person name="Ventura J.J."/>
            <person name="Kelkar N."/>
            <person name="Tanaka Y."/>
            <person name="Kyuuma M."/>
            <person name="Takeshita T."/>
            <person name="Flavell R.A."/>
            <person name="Davis R.J."/>
        </authorList>
    </citation>
    <scope>FUNCTION OF THE P38 MAP KINASE SIGNAL TRANSDUCTION PATHWAY</scope>
</reference>
<reference key="6">
    <citation type="journal article" date="2003" name="Mol. Cell. Biol.">
        <title>Negative feedback regulation of MKK6 mRNA stability by p38alpha mitogen-activated protein kinase.</title>
        <authorList>
            <person name="Ambrosino C."/>
            <person name="Mace G."/>
            <person name="Galban S."/>
            <person name="Fritsch C."/>
            <person name="Vintersten K."/>
            <person name="Black E."/>
            <person name="Gorospe M."/>
            <person name="Nebreda A.R."/>
        </authorList>
    </citation>
    <scope>INDUCTION</scope>
</reference>
<reference key="7">
    <citation type="journal article" date="2005" name="J. Biol. Chem.">
        <title>Activation of mitogen-activated protein kinase kinase (MKK) 3 and MKK6 by type I interferons.</title>
        <authorList>
            <person name="Li Y."/>
            <person name="Batra S."/>
            <person name="Sassano A."/>
            <person name="Majchrzak B."/>
            <person name="Levy D.E."/>
            <person name="Gaestel M."/>
            <person name="Fish E.N."/>
            <person name="Davis R.J."/>
            <person name="Platanias L.C."/>
        </authorList>
    </citation>
    <scope>ACTIVITY REGULATION</scope>
    <scope>FUNCTION OF THE P38 MAP KINASE SIGNAL TRANSDUCTION PATHWAY</scope>
</reference>
<reference key="8">
    <citation type="journal article" date="2006" name="Cell Death Differ.">
        <title>Osteoclast differentiation requires TAK1 and MKK6 for NFATc1 induction and NF-kappaB transactivation by RANKL.</title>
        <authorList>
            <person name="Huang H."/>
            <person name="Ryu J."/>
            <person name="Ha J."/>
            <person name="Chang E.J."/>
            <person name="Kim H.J."/>
            <person name="Kim H.M."/>
            <person name="Kitamura T."/>
            <person name="Lee Z.H."/>
            <person name="Kim H.H."/>
        </authorList>
    </citation>
    <scope>FUNCTION OF THE P38 MAP KINASE SIGNAL TRANSDUCTION PATHWAY</scope>
</reference>
<reference key="9">
    <citation type="journal article" date="2006" name="Proc. Natl. Acad. Sci. U.S.A.">
        <title>Constitutive activation of MKK6 in chondrocytes of transgenic mice inhibits proliferation and delays endochondral bone formation.</title>
        <authorList>
            <person name="Zhang R."/>
            <person name="Murakami S."/>
            <person name="Coustry F."/>
            <person name="Wang Y."/>
            <person name="de Crombrugghe B."/>
        </authorList>
    </citation>
    <scope>FUNCTION OF THE P38 MAP KINASE SIGNAL TRANSDUCTION PATHWAY</scope>
</reference>
<reference key="10">
    <citation type="journal article" date="2010" name="Cell">
        <title>A tissue-specific atlas of mouse protein phosphorylation and expression.</title>
        <authorList>
            <person name="Huttlin E.L."/>
            <person name="Jedrychowski M.P."/>
            <person name="Elias J.E."/>
            <person name="Goswami T."/>
            <person name="Rad R."/>
            <person name="Beausoleil S.A."/>
            <person name="Villen J."/>
            <person name="Haas W."/>
            <person name="Sowa M.E."/>
            <person name="Gygi S.P."/>
        </authorList>
    </citation>
    <scope>IDENTIFICATION BY MASS SPECTROMETRY [LARGE SCALE ANALYSIS]</scope>
    <source>
        <tissue>Brain</tissue>
        <tissue>Heart</tissue>
        <tissue>Lung</tissue>
        <tissue>Spleen</tissue>
    </source>
</reference>
<reference key="11">
    <citation type="journal article" date="2010" name="Cell. Signal.">
        <title>Differential activation of p38MAPK isoforms by MKK6 and MKK3.</title>
        <authorList>
            <person name="Remy G."/>
            <person name="Risco A.M."/>
            <person name="Inesta-Vaquera F.A."/>
            <person name="Gonzalez-Teran B."/>
            <person name="Sabio G."/>
            <person name="Davis R.J."/>
            <person name="Cuenda A."/>
        </authorList>
    </citation>
    <scope>FUNCTION</scope>
</reference>
<reference key="12">
    <citation type="journal article" date="1998" name="Oncogene">
        <title>Signaling by dual specificity kinases.</title>
        <authorList>
            <person name="Dhanasekaran N."/>
            <person name="Premkumar Reddy E."/>
        </authorList>
    </citation>
    <scope>REVIEW ON ACTIVITY REGULATION</scope>
    <scope>REVIEW ON FUNCTION</scope>
</reference>